<proteinExistence type="inferred from homology"/>
<name>PYRD_XANCB</name>
<feature type="chain" id="PRO_1000100295" description="Dihydroorotate dehydrogenase (quinone)">
    <location>
        <begin position="1"/>
        <end position="351"/>
    </location>
</feature>
<feature type="active site" description="Nucleophile" evidence="1">
    <location>
        <position position="175"/>
    </location>
</feature>
<feature type="binding site" evidence="1">
    <location>
        <begin position="61"/>
        <end position="65"/>
    </location>
    <ligand>
        <name>FMN</name>
        <dbReference type="ChEBI" id="CHEBI:58210"/>
    </ligand>
</feature>
<feature type="binding site" evidence="1">
    <location>
        <position position="65"/>
    </location>
    <ligand>
        <name>substrate</name>
    </ligand>
</feature>
<feature type="binding site" evidence="1">
    <location>
        <position position="85"/>
    </location>
    <ligand>
        <name>FMN</name>
        <dbReference type="ChEBI" id="CHEBI:58210"/>
    </ligand>
</feature>
<feature type="binding site" evidence="1">
    <location>
        <begin position="110"/>
        <end position="114"/>
    </location>
    <ligand>
        <name>substrate</name>
    </ligand>
</feature>
<feature type="binding site" evidence="1">
    <location>
        <position position="139"/>
    </location>
    <ligand>
        <name>FMN</name>
        <dbReference type="ChEBI" id="CHEBI:58210"/>
    </ligand>
</feature>
<feature type="binding site" evidence="1">
    <location>
        <position position="172"/>
    </location>
    <ligand>
        <name>FMN</name>
        <dbReference type="ChEBI" id="CHEBI:58210"/>
    </ligand>
</feature>
<feature type="binding site" evidence="1">
    <location>
        <position position="172"/>
    </location>
    <ligand>
        <name>substrate</name>
    </ligand>
</feature>
<feature type="binding site" evidence="1">
    <location>
        <position position="177"/>
    </location>
    <ligand>
        <name>substrate</name>
    </ligand>
</feature>
<feature type="binding site" evidence="1">
    <location>
        <position position="217"/>
    </location>
    <ligand>
        <name>FMN</name>
        <dbReference type="ChEBI" id="CHEBI:58210"/>
    </ligand>
</feature>
<feature type="binding site" evidence="1">
    <location>
        <position position="245"/>
    </location>
    <ligand>
        <name>FMN</name>
        <dbReference type="ChEBI" id="CHEBI:58210"/>
    </ligand>
</feature>
<feature type="binding site" evidence="1">
    <location>
        <begin position="246"/>
        <end position="247"/>
    </location>
    <ligand>
        <name>substrate</name>
    </ligand>
</feature>
<feature type="binding site" evidence="1">
    <location>
        <position position="268"/>
    </location>
    <ligand>
        <name>FMN</name>
        <dbReference type="ChEBI" id="CHEBI:58210"/>
    </ligand>
</feature>
<feature type="binding site" evidence="1">
    <location>
        <position position="297"/>
    </location>
    <ligand>
        <name>FMN</name>
        <dbReference type="ChEBI" id="CHEBI:58210"/>
    </ligand>
</feature>
<feature type="binding site" evidence="1">
    <location>
        <begin position="318"/>
        <end position="319"/>
    </location>
    <ligand>
        <name>FMN</name>
        <dbReference type="ChEBI" id="CHEBI:58210"/>
    </ligand>
</feature>
<evidence type="ECO:0000255" key="1">
    <source>
        <dbReference type="HAMAP-Rule" id="MF_00225"/>
    </source>
</evidence>
<protein>
    <recommendedName>
        <fullName evidence="1">Dihydroorotate dehydrogenase (quinone)</fullName>
        <ecNumber evidence="1">1.3.5.2</ecNumber>
    </recommendedName>
    <alternativeName>
        <fullName evidence="1">DHOdehase</fullName>
        <shortName evidence="1">DHOD</shortName>
        <shortName evidence="1">DHODase</shortName>
    </alternativeName>
    <alternativeName>
        <fullName evidence="1">Dihydroorotate oxidase</fullName>
    </alternativeName>
</protein>
<organism>
    <name type="scientific">Xanthomonas campestris pv. campestris (strain B100)</name>
    <dbReference type="NCBI Taxonomy" id="509169"/>
    <lineage>
        <taxon>Bacteria</taxon>
        <taxon>Pseudomonadati</taxon>
        <taxon>Pseudomonadota</taxon>
        <taxon>Gammaproteobacteria</taxon>
        <taxon>Lysobacterales</taxon>
        <taxon>Lysobacteraceae</taxon>
        <taxon>Xanthomonas</taxon>
    </lineage>
</organism>
<keyword id="KW-1003">Cell membrane</keyword>
<keyword id="KW-0285">Flavoprotein</keyword>
<keyword id="KW-0288">FMN</keyword>
<keyword id="KW-0472">Membrane</keyword>
<keyword id="KW-0560">Oxidoreductase</keyword>
<keyword id="KW-0665">Pyrimidine biosynthesis</keyword>
<accession>B0RTS3</accession>
<dbReference type="EC" id="1.3.5.2" evidence="1"/>
<dbReference type="EMBL" id="AM920689">
    <property type="protein sequence ID" value="CAP51837.1"/>
    <property type="molecule type" value="Genomic_DNA"/>
</dbReference>
<dbReference type="SMR" id="B0RTS3"/>
<dbReference type="KEGG" id="xca:xcc-b100_2477"/>
<dbReference type="HOGENOM" id="CLU_013640_2_0_6"/>
<dbReference type="UniPathway" id="UPA00070">
    <property type="reaction ID" value="UER00946"/>
</dbReference>
<dbReference type="Proteomes" id="UP000001188">
    <property type="component" value="Chromosome"/>
</dbReference>
<dbReference type="GO" id="GO:0005737">
    <property type="term" value="C:cytoplasm"/>
    <property type="evidence" value="ECO:0007669"/>
    <property type="project" value="InterPro"/>
</dbReference>
<dbReference type="GO" id="GO:0005886">
    <property type="term" value="C:plasma membrane"/>
    <property type="evidence" value="ECO:0007669"/>
    <property type="project" value="UniProtKB-SubCell"/>
</dbReference>
<dbReference type="GO" id="GO:0106430">
    <property type="term" value="F:dihydroorotate dehydrogenase (quinone) activity"/>
    <property type="evidence" value="ECO:0007669"/>
    <property type="project" value="UniProtKB-EC"/>
</dbReference>
<dbReference type="GO" id="GO:0006207">
    <property type="term" value="P:'de novo' pyrimidine nucleobase biosynthetic process"/>
    <property type="evidence" value="ECO:0007669"/>
    <property type="project" value="InterPro"/>
</dbReference>
<dbReference type="GO" id="GO:0044205">
    <property type="term" value="P:'de novo' UMP biosynthetic process"/>
    <property type="evidence" value="ECO:0007669"/>
    <property type="project" value="UniProtKB-UniRule"/>
</dbReference>
<dbReference type="CDD" id="cd04738">
    <property type="entry name" value="DHOD_2_like"/>
    <property type="match status" value="1"/>
</dbReference>
<dbReference type="FunFam" id="3.20.20.70:FF:000028">
    <property type="entry name" value="Dihydroorotate dehydrogenase (quinone)"/>
    <property type="match status" value="1"/>
</dbReference>
<dbReference type="Gene3D" id="3.20.20.70">
    <property type="entry name" value="Aldolase class I"/>
    <property type="match status" value="1"/>
</dbReference>
<dbReference type="HAMAP" id="MF_00225">
    <property type="entry name" value="DHO_dh_type2"/>
    <property type="match status" value="1"/>
</dbReference>
<dbReference type="InterPro" id="IPR013785">
    <property type="entry name" value="Aldolase_TIM"/>
</dbReference>
<dbReference type="InterPro" id="IPR050074">
    <property type="entry name" value="DHO_dehydrogenase"/>
</dbReference>
<dbReference type="InterPro" id="IPR012135">
    <property type="entry name" value="Dihydroorotate_DH_1_2"/>
</dbReference>
<dbReference type="InterPro" id="IPR005719">
    <property type="entry name" value="Dihydroorotate_DH_2"/>
</dbReference>
<dbReference type="InterPro" id="IPR005720">
    <property type="entry name" value="Dihydroorotate_DH_cat"/>
</dbReference>
<dbReference type="InterPro" id="IPR001295">
    <property type="entry name" value="Dihydroorotate_DH_CS"/>
</dbReference>
<dbReference type="NCBIfam" id="NF003644">
    <property type="entry name" value="PRK05286.1-1"/>
    <property type="match status" value="1"/>
</dbReference>
<dbReference type="NCBIfam" id="NF003645">
    <property type="entry name" value="PRK05286.1-2"/>
    <property type="match status" value="1"/>
</dbReference>
<dbReference type="NCBIfam" id="NF003646">
    <property type="entry name" value="PRK05286.1-4"/>
    <property type="match status" value="1"/>
</dbReference>
<dbReference type="NCBIfam" id="NF003652">
    <property type="entry name" value="PRK05286.2-5"/>
    <property type="match status" value="1"/>
</dbReference>
<dbReference type="NCBIfam" id="TIGR01036">
    <property type="entry name" value="pyrD_sub2"/>
    <property type="match status" value="1"/>
</dbReference>
<dbReference type="PANTHER" id="PTHR48109:SF4">
    <property type="entry name" value="DIHYDROOROTATE DEHYDROGENASE (QUINONE), MITOCHONDRIAL"/>
    <property type="match status" value="1"/>
</dbReference>
<dbReference type="PANTHER" id="PTHR48109">
    <property type="entry name" value="DIHYDROOROTATE DEHYDROGENASE (QUINONE), MITOCHONDRIAL-RELATED"/>
    <property type="match status" value="1"/>
</dbReference>
<dbReference type="Pfam" id="PF01180">
    <property type="entry name" value="DHO_dh"/>
    <property type="match status" value="1"/>
</dbReference>
<dbReference type="PIRSF" id="PIRSF000164">
    <property type="entry name" value="DHO_oxidase"/>
    <property type="match status" value="1"/>
</dbReference>
<dbReference type="SUPFAM" id="SSF51395">
    <property type="entry name" value="FMN-linked oxidoreductases"/>
    <property type="match status" value="1"/>
</dbReference>
<dbReference type="PROSITE" id="PS00911">
    <property type="entry name" value="DHODEHASE_1"/>
    <property type="match status" value="1"/>
</dbReference>
<dbReference type="PROSITE" id="PS00912">
    <property type="entry name" value="DHODEHASE_2"/>
    <property type="match status" value="1"/>
</dbReference>
<comment type="function">
    <text evidence="1">Catalyzes the conversion of dihydroorotate to orotate with quinone as electron acceptor.</text>
</comment>
<comment type="catalytic activity">
    <reaction evidence="1">
        <text>(S)-dihydroorotate + a quinone = orotate + a quinol</text>
        <dbReference type="Rhea" id="RHEA:30187"/>
        <dbReference type="ChEBI" id="CHEBI:24646"/>
        <dbReference type="ChEBI" id="CHEBI:30839"/>
        <dbReference type="ChEBI" id="CHEBI:30864"/>
        <dbReference type="ChEBI" id="CHEBI:132124"/>
        <dbReference type="EC" id="1.3.5.2"/>
    </reaction>
</comment>
<comment type="cofactor">
    <cofactor evidence="1">
        <name>FMN</name>
        <dbReference type="ChEBI" id="CHEBI:58210"/>
    </cofactor>
    <text evidence="1">Binds 1 FMN per subunit.</text>
</comment>
<comment type="pathway">
    <text evidence="1">Pyrimidine metabolism; UMP biosynthesis via de novo pathway; orotate from (S)-dihydroorotate (quinone route): step 1/1.</text>
</comment>
<comment type="subunit">
    <text evidence="1">Monomer.</text>
</comment>
<comment type="subcellular location">
    <subcellularLocation>
        <location evidence="1">Cell membrane</location>
        <topology evidence="1">Peripheral membrane protein</topology>
    </subcellularLocation>
</comment>
<comment type="similarity">
    <text evidence="1">Belongs to the dihydroorotate dehydrogenase family. Type 2 subfamily.</text>
</comment>
<gene>
    <name evidence="1" type="primary">pyrD</name>
    <name type="ordered locus">xcc-b100_2477</name>
</gene>
<sequence length="351" mass="37579">MYSLARPFLFAFDAERAHALALRAIDTAYRTGTTALVATRPVPLPTPAFGLMFPNPVGLGAGLDKNGEHIDALLALGFGFVEIGTVTPKPQEGNPKPRMFRLPEYQAVINRMGFNNLGVDVLVKNVQRARRRGGLLGINIGKNKDTPNEEATSDYRYCMERVYPLADYITVNISSPNTAGLRELQEEQALRRLIADLRETQEALAAQHGKRVPMLVKVAPDLNDRDIDAAARVLADLAVDGVIATNTTVTRTLVASHPMAEQAGGLSGAPLLGQSTLVLRRLRARLPESIPLIGVGGITSGADAVAKMAAGASLVQCYSGLVYRGPRLIGECVDAIRRRRESPSGGAVGPL</sequence>
<reference key="1">
    <citation type="journal article" date="2008" name="J. Biotechnol.">
        <title>The genome of Xanthomonas campestris pv. campestris B100 and its use for the reconstruction of metabolic pathways involved in xanthan biosynthesis.</title>
        <authorList>
            <person name="Vorhoelter F.-J."/>
            <person name="Schneiker S."/>
            <person name="Goesmann A."/>
            <person name="Krause L."/>
            <person name="Bekel T."/>
            <person name="Kaiser O."/>
            <person name="Linke B."/>
            <person name="Patschkowski T."/>
            <person name="Rueckert C."/>
            <person name="Schmid J."/>
            <person name="Sidhu V.K."/>
            <person name="Sieber V."/>
            <person name="Tauch A."/>
            <person name="Watt S.A."/>
            <person name="Weisshaar B."/>
            <person name="Becker A."/>
            <person name="Niehaus K."/>
            <person name="Puehler A."/>
        </authorList>
    </citation>
    <scope>NUCLEOTIDE SEQUENCE [LARGE SCALE GENOMIC DNA]</scope>
    <source>
        <strain>B100</strain>
    </source>
</reference>